<comment type="function">
    <text evidence="1">Catalyzes the conversion of dihydroorotate to orotate with quinone as electron acceptor.</text>
</comment>
<comment type="catalytic activity">
    <reaction evidence="1">
        <text>(S)-dihydroorotate + a quinone = orotate + a quinol</text>
        <dbReference type="Rhea" id="RHEA:30187"/>
        <dbReference type="ChEBI" id="CHEBI:24646"/>
        <dbReference type="ChEBI" id="CHEBI:30839"/>
        <dbReference type="ChEBI" id="CHEBI:30864"/>
        <dbReference type="ChEBI" id="CHEBI:132124"/>
        <dbReference type="EC" id="1.3.5.2"/>
    </reaction>
</comment>
<comment type="cofactor">
    <cofactor evidence="1">
        <name>FMN</name>
        <dbReference type="ChEBI" id="CHEBI:58210"/>
    </cofactor>
    <text evidence="1">Binds 1 FMN per subunit.</text>
</comment>
<comment type="pathway">
    <text evidence="1">Pyrimidine metabolism; UMP biosynthesis via de novo pathway; orotate from (S)-dihydroorotate (quinone route): step 1/1.</text>
</comment>
<comment type="subunit">
    <text evidence="1">Monomer.</text>
</comment>
<comment type="subcellular location">
    <subcellularLocation>
        <location evidence="1">Cell membrane</location>
        <topology evidence="1">Peripheral membrane protein</topology>
    </subcellularLocation>
</comment>
<comment type="similarity">
    <text evidence="1">Belongs to the dihydroorotate dehydrogenase family. Type 2 subfamily.</text>
</comment>
<name>PYRD_NEIMF</name>
<gene>
    <name evidence="1" type="primary">pyrD</name>
    <name type="ordered locus">NMC0218</name>
</gene>
<feature type="chain" id="PRO_1000024191" description="Dihydroorotate dehydrogenase (quinone)">
    <location>
        <begin position="1"/>
        <end position="335"/>
    </location>
</feature>
<feature type="active site" description="Nucleophile" evidence="1">
    <location>
        <position position="172"/>
    </location>
</feature>
<feature type="binding site" evidence="1">
    <location>
        <begin position="59"/>
        <end position="63"/>
    </location>
    <ligand>
        <name>FMN</name>
        <dbReference type="ChEBI" id="CHEBI:58210"/>
    </ligand>
</feature>
<feature type="binding site" evidence="1">
    <location>
        <position position="63"/>
    </location>
    <ligand>
        <name>substrate</name>
    </ligand>
</feature>
<feature type="binding site" evidence="1">
    <location>
        <position position="83"/>
    </location>
    <ligand>
        <name>FMN</name>
        <dbReference type="ChEBI" id="CHEBI:58210"/>
    </ligand>
</feature>
<feature type="binding site" evidence="1">
    <location>
        <begin position="108"/>
        <end position="112"/>
    </location>
    <ligand>
        <name>substrate</name>
    </ligand>
</feature>
<feature type="binding site" evidence="1">
    <location>
        <position position="136"/>
    </location>
    <ligand>
        <name>FMN</name>
        <dbReference type="ChEBI" id="CHEBI:58210"/>
    </ligand>
</feature>
<feature type="binding site" evidence="1">
    <location>
        <position position="169"/>
    </location>
    <ligand>
        <name>FMN</name>
        <dbReference type="ChEBI" id="CHEBI:58210"/>
    </ligand>
</feature>
<feature type="binding site" evidence="1">
    <location>
        <position position="169"/>
    </location>
    <ligand>
        <name>substrate</name>
    </ligand>
</feature>
<feature type="binding site" evidence="1">
    <location>
        <position position="174"/>
    </location>
    <ligand>
        <name>substrate</name>
    </ligand>
</feature>
<feature type="binding site" evidence="1">
    <location>
        <position position="214"/>
    </location>
    <ligand>
        <name>FMN</name>
        <dbReference type="ChEBI" id="CHEBI:58210"/>
    </ligand>
</feature>
<feature type="binding site" evidence="1">
    <location>
        <position position="242"/>
    </location>
    <ligand>
        <name>FMN</name>
        <dbReference type="ChEBI" id="CHEBI:58210"/>
    </ligand>
</feature>
<feature type="binding site" evidence="1">
    <location>
        <begin position="243"/>
        <end position="244"/>
    </location>
    <ligand>
        <name>substrate</name>
    </ligand>
</feature>
<feature type="binding site" evidence="1">
    <location>
        <position position="265"/>
    </location>
    <ligand>
        <name>FMN</name>
        <dbReference type="ChEBI" id="CHEBI:58210"/>
    </ligand>
</feature>
<feature type="binding site" evidence="1">
    <location>
        <position position="294"/>
    </location>
    <ligand>
        <name>FMN</name>
        <dbReference type="ChEBI" id="CHEBI:58210"/>
    </ligand>
</feature>
<feature type="binding site" evidence="1">
    <location>
        <begin position="315"/>
        <end position="316"/>
    </location>
    <ligand>
        <name>FMN</name>
        <dbReference type="ChEBI" id="CHEBI:58210"/>
    </ligand>
</feature>
<reference key="1">
    <citation type="journal article" date="2007" name="PLoS Genet.">
        <title>Meningococcal genetic variation mechanisms viewed through comparative analysis of serogroup C strain FAM18.</title>
        <authorList>
            <person name="Bentley S.D."/>
            <person name="Vernikos G.S."/>
            <person name="Snyder L.A.S."/>
            <person name="Churcher C."/>
            <person name="Arrowsmith C."/>
            <person name="Chillingworth T."/>
            <person name="Cronin A."/>
            <person name="Davis P.H."/>
            <person name="Holroyd N.E."/>
            <person name="Jagels K."/>
            <person name="Maddison M."/>
            <person name="Moule S."/>
            <person name="Rabbinowitsch E."/>
            <person name="Sharp S."/>
            <person name="Unwin L."/>
            <person name="Whitehead S."/>
            <person name="Quail M.A."/>
            <person name="Achtman M."/>
            <person name="Barrell B.G."/>
            <person name="Saunders N.J."/>
            <person name="Parkhill J."/>
        </authorList>
    </citation>
    <scope>NUCLEOTIDE SEQUENCE [LARGE SCALE GENOMIC DNA]</scope>
    <source>
        <strain>ATCC 700532 / DSM 15464 / FAM18</strain>
    </source>
</reference>
<organism>
    <name type="scientific">Neisseria meningitidis serogroup C / serotype 2a (strain ATCC 700532 / DSM 15464 / FAM18)</name>
    <dbReference type="NCBI Taxonomy" id="272831"/>
    <lineage>
        <taxon>Bacteria</taxon>
        <taxon>Pseudomonadati</taxon>
        <taxon>Pseudomonadota</taxon>
        <taxon>Betaproteobacteria</taxon>
        <taxon>Neisseriales</taxon>
        <taxon>Neisseriaceae</taxon>
        <taxon>Neisseria</taxon>
    </lineage>
</organism>
<keyword id="KW-1003">Cell membrane</keyword>
<keyword id="KW-0285">Flavoprotein</keyword>
<keyword id="KW-0288">FMN</keyword>
<keyword id="KW-0472">Membrane</keyword>
<keyword id="KW-0560">Oxidoreductase</keyword>
<keyword id="KW-0665">Pyrimidine biosynthesis</keyword>
<proteinExistence type="inferred from homology"/>
<dbReference type="EC" id="1.3.5.2" evidence="1"/>
<dbReference type="EMBL" id="AM421808">
    <property type="protein sequence ID" value="CAM09533.1"/>
    <property type="molecule type" value="Genomic_DNA"/>
</dbReference>
<dbReference type="RefSeq" id="WP_002225986.1">
    <property type="nucleotide sequence ID" value="NC_008767.1"/>
</dbReference>
<dbReference type="SMR" id="A1KRQ4"/>
<dbReference type="KEGG" id="nmc:NMC0218"/>
<dbReference type="HOGENOM" id="CLU_013640_2_0_4"/>
<dbReference type="UniPathway" id="UPA00070">
    <property type="reaction ID" value="UER00946"/>
</dbReference>
<dbReference type="Proteomes" id="UP000002286">
    <property type="component" value="Chromosome"/>
</dbReference>
<dbReference type="GO" id="GO:0005737">
    <property type="term" value="C:cytoplasm"/>
    <property type="evidence" value="ECO:0007669"/>
    <property type="project" value="InterPro"/>
</dbReference>
<dbReference type="GO" id="GO:0005886">
    <property type="term" value="C:plasma membrane"/>
    <property type="evidence" value="ECO:0007669"/>
    <property type="project" value="UniProtKB-SubCell"/>
</dbReference>
<dbReference type="GO" id="GO:0106430">
    <property type="term" value="F:dihydroorotate dehydrogenase (quinone) activity"/>
    <property type="evidence" value="ECO:0007669"/>
    <property type="project" value="UniProtKB-EC"/>
</dbReference>
<dbReference type="GO" id="GO:0006207">
    <property type="term" value="P:'de novo' pyrimidine nucleobase biosynthetic process"/>
    <property type="evidence" value="ECO:0007669"/>
    <property type="project" value="InterPro"/>
</dbReference>
<dbReference type="GO" id="GO:0044205">
    <property type="term" value="P:'de novo' UMP biosynthetic process"/>
    <property type="evidence" value="ECO:0007669"/>
    <property type="project" value="UniProtKB-UniRule"/>
</dbReference>
<dbReference type="CDD" id="cd04738">
    <property type="entry name" value="DHOD_2_like"/>
    <property type="match status" value="1"/>
</dbReference>
<dbReference type="FunFam" id="3.20.20.70:FF:000028">
    <property type="entry name" value="Dihydroorotate dehydrogenase (quinone)"/>
    <property type="match status" value="1"/>
</dbReference>
<dbReference type="Gene3D" id="3.20.20.70">
    <property type="entry name" value="Aldolase class I"/>
    <property type="match status" value="1"/>
</dbReference>
<dbReference type="HAMAP" id="MF_00225">
    <property type="entry name" value="DHO_dh_type2"/>
    <property type="match status" value="1"/>
</dbReference>
<dbReference type="InterPro" id="IPR013785">
    <property type="entry name" value="Aldolase_TIM"/>
</dbReference>
<dbReference type="InterPro" id="IPR050074">
    <property type="entry name" value="DHO_dehydrogenase"/>
</dbReference>
<dbReference type="InterPro" id="IPR012135">
    <property type="entry name" value="Dihydroorotate_DH_1_2"/>
</dbReference>
<dbReference type="InterPro" id="IPR005719">
    <property type="entry name" value="Dihydroorotate_DH_2"/>
</dbReference>
<dbReference type="InterPro" id="IPR005720">
    <property type="entry name" value="Dihydroorotate_DH_cat"/>
</dbReference>
<dbReference type="InterPro" id="IPR001295">
    <property type="entry name" value="Dihydroorotate_DH_CS"/>
</dbReference>
<dbReference type="NCBIfam" id="NF003644">
    <property type="entry name" value="PRK05286.1-1"/>
    <property type="match status" value="1"/>
</dbReference>
<dbReference type="NCBIfam" id="NF003645">
    <property type="entry name" value="PRK05286.1-2"/>
    <property type="match status" value="1"/>
</dbReference>
<dbReference type="NCBIfam" id="NF003646">
    <property type="entry name" value="PRK05286.1-4"/>
    <property type="match status" value="1"/>
</dbReference>
<dbReference type="NCBIfam" id="NF003652">
    <property type="entry name" value="PRK05286.2-5"/>
    <property type="match status" value="1"/>
</dbReference>
<dbReference type="NCBIfam" id="TIGR01036">
    <property type="entry name" value="pyrD_sub2"/>
    <property type="match status" value="1"/>
</dbReference>
<dbReference type="PANTHER" id="PTHR48109:SF4">
    <property type="entry name" value="DIHYDROOROTATE DEHYDROGENASE (QUINONE), MITOCHONDRIAL"/>
    <property type="match status" value="1"/>
</dbReference>
<dbReference type="PANTHER" id="PTHR48109">
    <property type="entry name" value="DIHYDROOROTATE DEHYDROGENASE (QUINONE), MITOCHONDRIAL-RELATED"/>
    <property type="match status" value="1"/>
</dbReference>
<dbReference type="Pfam" id="PF01180">
    <property type="entry name" value="DHO_dh"/>
    <property type="match status" value="1"/>
</dbReference>
<dbReference type="PIRSF" id="PIRSF000164">
    <property type="entry name" value="DHO_oxidase"/>
    <property type="match status" value="1"/>
</dbReference>
<dbReference type="SUPFAM" id="SSF51395">
    <property type="entry name" value="FMN-linked oxidoreductases"/>
    <property type="match status" value="1"/>
</dbReference>
<dbReference type="PROSITE" id="PS00911">
    <property type="entry name" value="DHODEHASE_1"/>
    <property type="match status" value="1"/>
</dbReference>
<protein>
    <recommendedName>
        <fullName evidence="1">Dihydroorotate dehydrogenase (quinone)</fullName>
        <ecNumber evidence="1">1.3.5.2</ecNumber>
    </recommendedName>
    <alternativeName>
        <fullName evidence="1">DHOdehase</fullName>
        <shortName evidence="1">DHOD</shortName>
        <shortName evidence="1">DHODase</shortName>
    </alternativeName>
    <alternativeName>
        <fullName evidence="1">Dihydroorotate oxidase</fullName>
    </alternativeName>
</protein>
<evidence type="ECO:0000255" key="1">
    <source>
        <dbReference type="HAMAP-Rule" id="MF_00225"/>
    </source>
</evidence>
<sequence>MYPLARRILFALDAEKAHHFTLDALNMVYKLGLIPVTGNRTKPVKLMGLDLPNPVGLAAGLDKNGEYIDALGALGFGFIEIGTVTPNPQPGNPQPRLFRVPEYQGIINRMGFNNHGIDAMIQNIEKSKFSGVLGINIGKNAVTPIENAADDYLICLEKAYAHASYITVNISSPNTKNLRALQGGDELSALLEALKNKQAQLASVHGKYVPLAVKIAPDLDEAQIEDIAHVVKSVEMDGIIATNTTIDKSSLGSHPLAGEQGGLSGLPVHEKSNRVLKLLADHIDGKLPIIGVGGIMEGRDAAEKIRLGATAVQVYSGLIYKGPALVKECLKALAQ</sequence>
<accession>A1KRQ4</accession>